<accession>P83483</accession>
<accession>F4KCG2</accession>
<accession>Q541W2</accession>
<accession>Q541W7</accession>
<accession>Q8VX26</accession>
<accession>Q9C5A8</accession>
<accession>Q9C5B0</accession>
<dbReference type="EC" id="7.1.2.2"/>
<dbReference type="EMBL" id="AJ271468">
    <property type="protein sequence ID" value="CAC81058.1"/>
    <property type="molecule type" value="mRNA"/>
</dbReference>
<dbReference type="EMBL" id="AL590346">
    <property type="protein sequence ID" value="CAC35872.1"/>
    <property type="molecule type" value="Genomic_DNA"/>
</dbReference>
<dbReference type="EMBL" id="CP002688">
    <property type="protein sequence ID" value="AED91336.1"/>
    <property type="molecule type" value="Genomic_DNA"/>
</dbReference>
<dbReference type="EMBL" id="AK118538">
    <property type="protein sequence ID" value="BAC43141.1"/>
    <property type="molecule type" value="mRNA"/>
</dbReference>
<dbReference type="EMBL" id="AK118582">
    <property type="protein sequence ID" value="BAC43182.1"/>
    <property type="molecule type" value="mRNA"/>
</dbReference>
<dbReference type="EMBL" id="AY054222">
    <property type="protein sequence ID" value="AAL06882.1"/>
    <property type="molecule type" value="mRNA"/>
</dbReference>
<dbReference type="EMBL" id="AY080681">
    <property type="protein sequence ID" value="AAL86357.1"/>
    <property type="molecule type" value="mRNA"/>
</dbReference>
<dbReference type="EMBL" id="AY113178">
    <property type="protein sequence ID" value="AAM47481.1"/>
    <property type="molecule type" value="mRNA"/>
</dbReference>
<dbReference type="EMBL" id="AY117269">
    <property type="protein sequence ID" value="AAM51344.1"/>
    <property type="molecule type" value="mRNA"/>
</dbReference>
<dbReference type="RefSeq" id="NP_568203.2">
    <property type="nucleotide sequence ID" value="NM_120953.4"/>
</dbReference>
<dbReference type="RefSeq" id="NP_568204.1">
    <property type="nucleotide sequence ID" value="NM_120954.3"/>
</dbReference>
<dbReference type="SMR" id="P83483"/>
<dbReference type="BioGRID" id="16046">
    <property type="interactions" value="7"/>
</dbReference>
<dbReference type="BioGRID" id="16048">
    <property type="interactions" value="5"/>
</dbReference>
<dbReference type="FunCoup" id="P83483">
    <property type="interactions" value="1991"/>
</dbReference>
<dbReference type="IntAct" id="P83483">
    <property type="interactions" value="2"/>
</dbReference>
<dbReference type="MINT" id="P83483"/>
<dbReference type="STRING" id="3702.P83483"/>
<dbReference type="MetOSite" id="P83483"/>
<dbReference type="GeneID" id="830768"/>
<dbReference type="KEGG" id="ath:AT5G08670"/>
<dbReference type="KEGG" id="ath:AT5G08690"/>
<dbReference type="Araport" id="AT5G08670"/>
<dbReference type="TAIR" id="AT5G08670"/>
<dbReference type="InParanoid" id="P83483"/>
<dbReference type="OrthoDB" id="1069748at2759"/>
<dbReference type="PhylomeDB" id="P83483"/>
<dbReference type="BioCyc" id="ARA:AT5G08670-MONOMER"/>
<dbReference type="CD-CODE" id="4299E36E">
    <property type="entry name" value="Nucleolus"/>
</dbReference>
<dbReference type="PRO" id="PR:P83483"/>
<dbReference type="Proteomes" id="UP000006548">
    <property type="component" value="Chromosome 5"/>
</dbReference>
<dbReference type="ExpressionAtlas" id="P83483">
    <property type="expression patterns" value="baseline and differential"/>
</dbReference>
<dbReference type="GO" id="GO:0005743">
    <property type="term" value="C:mitochondrial inner membrane"/>
    <property type="evidence" value="ECO:0007669"/>
    <property type="project" value="UniProtKB-SubCell"/>
</dbReference>
<dbReference type="GO" id="GO:0045259">
    <property type="term" value="C:proton-transporting ATP synthase complex"/>
    <property type="evidence" value="ECO:0007669"/>
    <property type="project" value="UniProtKB-KW"/>
</dbReference>
<dbReference type="GO" id="GO:0005524">
    <property type="term" value="F:ATP binding"/>
    <property type="evidence" value="ECO:0007669"/>
    <property type="project" value="UniProtKB-KW"/>
</dbReference>
<dbReference type="GO" id="GO:0016887">
    <property type="term" value="F:ATP hydrolysis activity"/>
    <property type="evidence" value="ECO:0007669"/>
    <property type="project" value="InterPro"/>
</dbReference>
<dbReference type="GO" id="GO:0046933">
    <property type="term" value="F:proton-transporting ATP synthase activity, rotational mechanism"/>
    <property type="evidence" value="ECO:0007669"/>
    <property type="project" value="InterPro"/>
</dbReference>
<dbReference type="GO" id="GO:0042776">
    <property type="term" value="P:proton motive force-driven mitochondrial ATP synthesis"/>
    <property type="evidence" value="ECO:0000318"/>
    <property type="project" value="GO_Central"/>
</dbReference>
<dbReference type="CDD" id="cd18110">
    <property type="entry name" value="ATP-synt_F1_beta_C"/>
    <property type="match status" value="1"/>
</dbReference>
<dbReference type="CDD" id="cd18115">
    <property type="entry name" value="ATP-synt_F1_beta_N"/>
    <property type="match status" value="1"/>
</dbReference>
<dbReference type="CDD" id="cd01133">
    <property type="entry name" value="F1-ATPase_beta_CD"/>
    <property type="match status" value="1"/>
</dbReference>
<dbReference type="FunFam" id="1.10.1140.10:FF:000001">
    <property type="entry name" value="ATP synthase subunit beta"/>
    <property type="match status" value="1"/>
</dbReference>
<dbReference type="FunFam" id="2.40.10.170:FF:000006">
    <property type="entry name" value="ATP synthase subunit beta"/>
    <property type="match status" value="1"/>
</dbReference>
<dbReference type="FunFam" id="3.40.50.12240:FF:000006">
    <property type="entry name" value="ATP synthase subunit beta"/>
    <property type="match status" value="1"/>
</dbReference>
<dbReference type="FunFam" id="3.40.50.300:FF:000026">
    <property type="entry name" value="ATP synthase subunit beta"/>
    <property type="match status" value="1"/>
</dbReference>
<dbReference type="Gene3D" id="2.40.10.170">
    <property type="match status" value="1"/>
</dbReference>
<dbReference type="Gene3D" id="1.10.10.910">
    <property type="entry name" value="ATP synthase, F1 beta subunit"/>
    <property type="match status" value="1"/>
</dbReference>
<dbReference type="Gene3D" id="1.10.1140.10">
    <property type="entry name" value="Bovine Mitochondrial F1-atpase, Atp Synthase Beta Chain, Chain D, domain 3"/>
    <property type="match status" value="1"/>
</dbReference>
<dbReference type="Gene3D" id="3.40.50.300">
    <property type="entry name" value="P-loop containing nucleotide triphosphate hydrolases"/>
    <property type="match status" value="1"/>
</dbReference>
<dbReference type="HAMAP" id="MF_01347">
    <property type="entry name" value="ATP_synth_beta_bact"/>
    <property type="match status" value="1"/>
</dbReference>
<dbReference type="InterPro" id="IPR003593">
    <property type="entry name" value="AAA+_ATPase"/>
</dbReference>
<dbReference type="InterPro" id="IPR055190">
    <property type="entry name" value="ATP-synt_VA_C"/>
</dbReference>
<dbReference type="InterPro" id="IPR042079">
    <property type="entry name" value="ATP_synt_F1_beta_sf"/>
</dbReference>
<dbReference type="InterPro" id="IPR020971">
    <property type="entry name" value="ATP_synth_F1_beta_su"/>
</dbReference>
<dbReference type="InterPro" id="IPR005722">
    <property type="entry name" value="ATP_synth_F1_bsu"/>
</dbReference>
<dbReference type="InterPro" id="IPR020003">
    <property type="entry name" value="ATPase_a/bsu_AS"/>
</dbReference>
<dbReference type="InterPro" id="IPR050053">
    <property type="entry name" value="ATPase_alpha/beta_chains"/>
</dbReference>
<dbReference type="InterPro" id="IPR004100">
    <property type="entry name" value="ATPase_F1/V1/A1_a/bsu_N"/>
</dbReference>
<dbReference type="InterPro" id="IPR036121">
    <property type="entry name" value="ATPase_F1/V1/A1_a/bsu_N_sf"/>
</dbReference>
<dbReference type="InterPro" id="IPR000194">
    <property type="entry name" value="ATPase_F1/V1/A1_a/bsu_nucl-bd"/>
</dbReference>
<dbReference type="InterPro" id="IPR024034">
    <property type="entry name" value="ATPase_F1/V1_b/a_C"/>
</dbReference>
<dbReference type="InterPro" id="IPR027417">
    <property type="entry name" value="P-loop_NTPase"/>
</dbReference>
<dbReference type="NCBIfam" id="TIGR01039">
    <property type="entry name" value="atpD"/>
    <property type="match status" value="1"/>
</dbReference>
<dbReference type="PANTHER" id="PTHR15184">
    <property type="entry name" value="ATP SYNTHASE"/>
    <property type="match status" value="1"/>
</dbReference>
<dbReference type="PANTHER" id="PTHR15184:SF80">
    <property type="entry name" value="ATP SYNTHASE SUBUNIT BETA-1, MITOCHONDRIAL-RELATED"/>
    <property type="match status" value="1"/>
</dbReference>
<dbReference type="Pfam" id="PF00006">
    <property type="entry name" value="ATP-synt_ab"/>
    <property type="match status" value="1"/>
</dbReference>
<dbReference type="Pfam" id="PF02874">
    <property type="entry name" value="ATP-synt_ab_N"/>
    <property type="match status" value="1"/>
</dbReference>
<dbReference type="Pfam" id="PF22919">
    <property type="entry name" value="ATP-synt_VA_C"/>
    <property type="match status" value="1"/>
</dbReference>
<dbReference type="Pfam" id="PF11421">
    <property type="entry name" value="Synthase_beta"/>
    <property type="match status" value="1"/>
</dbReference>
<dbReference type="PIRSF" id="PIRSF039072">
    <property type="entry name" value="ATPase_subunit_beta"/>
    <property type="match status" value="1"/>
</dbReference>
<dbReference type="SMART" id="SM00382">
    <property type="entry name" value="AAA"/>
    <property type="match status" value="1"/>
</dbReference>
<dbReference type="SUPFAM" id="SSF47917">
    <property type="entry name" value="C-terminal domain of alpha and beta subunits of F1 ATP synthase"/>
    <property type="match status" value="1"/>
</dbReference>
<dbReference type="SUPFAM" id="SSF50615">
    <property type="entry name" value="N-terminal domain of alpha and beta subunits of F1 ATP synthase"/>
    <property type="match status" value="1"/>
</dbReference>
<dbReference type="SUPFAM" id="SSF52540">
    <property type="entry name" value="P-loop containing nucleoside triphosphate hydrolases"/>
    <property type="match status" value="1"/>
</dbReference>
<dbReference type="PROSITE" id="PS00152">
    <property type="entry name" value="ATPASE_ALPHA_BETA"/>
    <property type="match status" value="1"/>
</dbReference>
<proteinExistence type="evidence at protein level"/>
<organism evidence="8">
    <name type="scientific">Arabidopsis thaliana</name>
    <name type="common">Mouse-ear cress</name>
    <dbReference type="NCBI Taxonomy" id="3702"/>
    <lineage>
        <taxon>Eukaryota</taxon>
        <taxon>Viridiplantae</taxon>
        <taxon>Streptophyta</taxon>
        <taxon>Embryophyta</taxon>
        <taxon>Tracheophyta</taxon>
        <taxon>Spermatophyta</taxon>
        <taxon>Magnoliopsida</taxon>
        <taxon>eudicotyledons</taxon>
        <taxon>Gunneridae</taxon>
        <taxon>Pentapetalae</taxon>
        <taxon>rosids</taxon>
        <taxon>malvids</taxon>
        <taxon>Brassicales</taxon>
        <taxon>Brassicaceae</taxon>
        <taxon>Camelineae</taxon>
        <taxon>Arabidopsis</taxon>
    </lineage>
</organism>
<sequence>MASRRVLSSLLRSSSGRSAAKLGNRNPRLPSPSPARHAAPCSYLLGRVAEYATSSPASSAAPSSAPAKDEGKKTYDYGGKGAIGRVCQVIGAIVDVRFEDQEGLPPIMTSLEVQDHPTRLVLEVSHHLGQNVVRTIAMDGTEGLVRGRKVLNTGAPITVPVGRATLGRIMNVLGEPIDERGEIKTEHYLPIHRDAPALVDLATGQEILATGIKVVDLLAPYQRGGKIGLFGGAGVGKTVLIMELINNVAKAHGGFSVFAGVGERTREGNDLYREMIESGVIKLGEKQSESKCALVYGQMNEPPGARARVGLTGLTVAEYFRDAEGQDVLLFIDNIFRFTQANSEVSALLGRIPSAVGYQPTLASDLGALQERITTTKKGSITSVQAIYVPADDLTDPAPATTFAHLDATTVLSRQISELGIYPAVDPLDSTSRMLSPHILGEEHYNTARGVQKVLQNYKNLQDIIAILGMDELSEDDKLTVARARKIQRFLSQPFHVAEIFTGAPGKYVDLKENINSFQGLLDGKYDDLSEQSFYMVGGIDEVVAKAEKIAKESAA</sequence>
<name>ATPBM_ARATH</name>
<evidence type="ECO:0000250" key="1"/>
<evidence type="ECO:0000250" key="2">
    <source>
        <dbReference type="UniProtKB" id="P19366"/>
    </source>
</evidence>
<evidence type="ECO:0000250" key="3">
    <source>
        <dbReference type="UniProtKB" id="P29685"/>
    </source>
</evidence>
<evidence type="ECO:0000256" key="4">
    <source>
        <dbReference type="SAM" id="MobiDB-lite"/>
    </source>
</evidence>
<evidence type="ECO:0000269" key="5">
    <source>
    </source>
</evidence>
<evidence type="ECO:0000269" key="6">
    <source>
    </source>
</evidence>
<evidence type="ECO:0000305" key="7"/>
<evidence type="ECO:0000312" key="8">
    <source>
        <dbReference type="EMBL" id="CAC35872.1"/>
    </source>
</evidence>
<reference evidence="7" key="1">
    <citation type="thesis" date="2000" institute="Cambridge University" country="United Kingdom">
        <authorList>
            <person name="Mahon P."/>
        </authorList>
    </citation>
    <scope>NUCLEOTIDE SEQUENCE [MRNA]</scope>
    <source>
        <strain>cv. Columbia</strain>
    </source>
</reference>
<reference evidence="7" key="2">
    <citation type="journal article" date="2000" name="Nature">
        <title>Sequence and analysis of chromosome 5 of the plant Arabidopsis thaliana.</title>
        <authorList>
            <person name="Tabata S."/>
            <person name="Kaneko T."/>
            <person name="Nakamura Y."/>
            <person name="Kotani H."/>
            <person name="Kato T."/>
            <person name="Asamizu E."/>
            <person name="Miyajima N."/>
            <person name="Sasamoto S."/>
            <person name="Kimura T."/>
            <person name="Hosouchi T."/>
            <person name="Kawashima K."/>
            <person name="Kohara M."/>
            <person name="Matsumoto M."/>
            <person name="Matsuno A."/>
            <person name="Muraki A."/>
            <person name="Nakayama S."/>
            <person name="Nakazaki N."/>
            <person name="Naruo K."/>
            <person name="Okumura S."/>
            <person name="Shinpo S."/>
            <person name="Takeuchi C."/>
            <person name="Wada T."/>
            <person name="Watanabe A."/>
            <person name="Yamada M."/>
            <person name="Yasuda M."/>
            <person name="Sato S."/>
            <person name="de la Bastide M."/>
            <person name="Huang E."/>
            <person name="Spiegel L."/>
            <person name="Gnoj L."/>
            <person name="O'Shaughnessy A."/>
            <person name="Preston R."/>
            <person name="Habermann K."/>
            <person name="Murray J."/>
            <person name="Johnson D."/>
            <person name="Rohlfing T."/>
            <person name="Nelson J."/>
            <person name="Stoneking T."/>
            <person name="Pepin K."/>
            <person name="Spieth J."/>
            <person name="Sekhon M."/>
            <person name="Armstrong J."/>
            <person name="Becker M."/>
            <person name="Belter E."/>
            <person name="Cordum H."/>
            <person name="Cordes M."/>
            <person name="Courtney L."/>
            <person name="Courtney W."/>
            <person name="Dante M."/>
            <person name="Du H."/>
            <person name="Edwards J."/>
            <person name="Fryman J."/>
            <person name="Haakensen B."/>
            <person name="Lamar E."/>
            <person name="Latreille P."/>
            <person name="Leonard S."/>
            <person name="Meyer R."/>
            <person name="Mulvaney E."/>
            <person name="Ozersky P."/>
            <person name="Riley A."/>
            <person name="Strowmatt C."/>
            <person name="Wagner-McPherson C."/>
            <person name="Wollam A."/>
            <person name="Yoakum M."/>
            <person name="Bell M."/>
            <person name="Dedhia N."/>
            <person name="Parnell L."/>
            <person name="Shah R."/>
            <person name="Rodriguez M."/>
            <person name="Hoon See L."/>
            <person name="Vil D."/>
            <person name="Baker J."/>
            <person name="Kirchoff K."/>
            <person name="Toth K."/>
            <person name="King L."/>
            <person name="Bahret A."/>
            <person name="Miller B."/>
            <person name="Marra M.A."/>
            <person name="Martienssen R."/>
            <person name="McCombie W.R."/>
            <person name="Wilson R.K."/>
            <person name="Murphy G."/>
            <person name="Bancroft I."/>
            <person name="Volckaert G."/>
            <person name="Wambutt R."/>
            <person name="Duesterhoeft A."/>
            <person name="Stiekema W."/>
            <person name="Pohl T."/>
            <person name="Entian K.-D."/>
            <person name="Terryn N."/>
            <person name="Hartley N."/>
            <person name="Bent E."/>
            <person name="Johnson S."/>
            <person name="Langham S.-A."/>
            <person name="McCullagh B."/>
            <person name="Robben J."/>
            <person name="Grymonprez B."/>
            <person name="Zimmermann W."/>
            <person name="Ramsperger U."/>
            <person name="Wedler H."/>
            <person name="Balke K."/>
            <person name="Wedler E."/>
            <person name="Peters S."/>
            <person name="van Staveren M."/>
            <person name="Dirkse W."/>
            <person name="Mooijman P."/>
            <person name="Klein Lankhorst R."/>
            <person name="Weitzenegger T."/>
            <person name="Bothe G."/>
            <person name="Rose M."/>
            <person name="Hauf J."/>
            <person name="Berneiser S."/>
            <person name="Hempel S."/>
            <person name="Feldpausch M."/>
            <person name="Lamberth S."/>
            <person name="Villarroel R."/>
            <person name="Gielen J."/>
            <person name="Ardiles W."/>
            <person name="Bents O."/>
            <person name="Lemcke K."/>
            <person name="Kolesov G."/>
            <person name="Mayer K.F.X."/>
            <person name="Rudd S."/>
            <person name="Schoof H."/>
            <person name="Schueller C."/>
            <person name="Zaccaria P."/>
            <person name="Mewes H.-W."/>
            <person name="Bevan M."/>
            <person name="Fransz P.F."/>
        </authorList>
    </citation>
    <scope>NUCLEOTIDE SEQUENCE [LARGE SCALE GENOMIC DNA]</scope>
    <source>
        <strain>cv. Columbia</strain>
    </source>
</reference>
<reference evidence="7" key="3">
    <citation type="journal article" date="2017" name="Plant J.">
        <title>Araport11: a complete reannotation of the Arabidopsis thaliana reference genome.</title>
        <authorList>
            <person name="Cheng C.Y."/>
            <person name="Krishnakumar V."/>
            <person name="Chan A.P."/>
            <person name="Thibaud-Nissen F."/>
            <person name="Schobel S."/>
            <person name="Town C.D."/>
        </authorList>
    </citation>
    <scope>GENOME REANNOTATION</scope>
    <scope>SEQUENCE REVISION</scope>
    <source>
        <strain>cv. Columbia</strain>
    </source>
</reference>
<reference key="4">
    <citation type="journal article" date="2002" name="Science">
        <title>Functional annotation of a full-length Arabidopsis cDNA collection.</title>
        <authorList>
            <person name="Seki M."/>
            <person name="Narusaka M."/>
            <person name="Kamiya A."/>
            <person name="Ishida J."/>
            <person name="Satou M."/>
            <person name="Sakurai T."/>
            <person name="Nakajima M."/>
            <person name="Enju A."/>
            <person name="Akiyama K."/>
            <person name="Oono Y."/>
            <person name="Muramatsu M."/>
            <person name="Hayashizaki Y."/>
            <person name="Kawai J."/>
            <person name="Carninci P."/>
            <person name="Itoh M."/>
            <person name="Ishii Y."/>
            <person name="Arakawa T."/>
            <person name="Shibata K."/>
            <person name="Shinagawa A."/>
            <person name="Shinozaki K."/>
        </authorList>
    </citation>
    <scope>NUCLEOTIDE SEQUENCE [LARGE SCALE MRNA]</scope>
    <source>
        <strain>cv. Columbia</strain>
    </source>
</reference>
<reference key="5">
    <citation type="journal article" date="2003" name="Science">
        <title>Empirical analysis of transcriptional activity in the Arabidopsis genome.</title>
        <authorList>
            <person name="Yamada K."/>
            <person name="Lim J."/>
            <person name="Dale J.M."/>
            <person name="Chen H."/>
            <person name="Shinn P."/>
            <person name="Palm C.J."/>
            <person name="Southwick A.M."/>
            <person name="Wu H.C."/>
            <person name="Kim C.J."/>
            <person name="Nguyen M."/>
            <person name="Pham P.K."/>
            <person name="Cheuk R.F."/>
            <person name="Karlin-Newmann G."/>
            <person name="Liu S.X."/>
            <person name="Lam B."/>
            <person name="Sakano H."/>
            <person name="Wu T."/>
            <person name="Yu G."/>
            <person name="Miranda M."/>
            <person name="Quach H.L."/>
            <person name="Tripp M."/>
            <person name="Chang C.H."/>
            <person name="Lee J.M."/>
            <person name="Toriumi M.J."/>
            <person name="Chan M.M."/>
            <person name="Tang C.C."/>
            <person name="Onodera C.S."/>
            <person name="Deng J.M."/>
            <person name="Akiyama K."/>
            <person name="Ansari Y."/>
            <person name="Arakawa T."/>
            <person name="Banh J."/>
            <person name="Banno F."/>
            <person name="Bowser L."/>
            <person name="Brooks S.Y."/>
            <person name="Carninci P."/>
            <person name="Chao Q."/>
            <person name="Choy N."/>
            <person name="Enju A."/>
            <person name="Goldsmith A.D."/>
            <person name="Gurjal M."/>
            <person name="Hansen N.F."/>
            <person name="Hayashizaki Y."/>
            <person name="Johnson-Hopson C."/>
            <person name="Hsuan V.W."/>
            <person name="Iida K."/>
            <person name="Karnes M."/>
            <person name="Khan S."/>
            <person name="Koesema E."/>
            <person name="Ishida J."/>
            <person name="Jiang P.X."/>
            <person name="Jones T."/>
            <person name="Kawai J."/>
            <person name="Kamiya A."/>
            <person name="Meyers C."/>
            <person name="Nakajima M."/>
            <person name="Narusaka M."/>
            <person name="Seki M."/>
            <person name="Sakurai T."/>
            <person name="Satou M."/>
            <person name="Tamse R."/>
            <person name="Vaysberg M."/>
            <person name="Wallender E.K."/>
            <person name="Wong C."/>
            <person name="Yamamura Y."/>
            <person name="Yuan S."/>
            <person name="Shinozaki K."/>
            <person name="Davis R.W."/>
            <person name="Theologis A."/>
            <person name="Ecker J.R."/>
        </authorList>
    </citation>
    <scope>NUCLEOTIDE SEQUENCE [LARGE SCALE MRNA]</scope>
    <source>
        <strain>cv. Columbia</strain>
    </source>
</reference>
<reference evidence="7" key="6">
    <citation type="journal article" date="2001" name="Plant Physiol.">
        <title>Proteomic approach to identify novel mitochondrial proteins in Arabidopsis.</title>
        <authorList>
            <person name="Kruft V."/>
            <person name="Eubel H."/>
            <person name="Jaensch L."/>
            <person name="Werhahn W."/>
            <person name="Braun H.-P."/>
        </authorList>
    </citation>
    <scope>PROTEIN SEQUENCE OF 52-66</scope>
    <scope>SUBCELLULAR LOCATION</scope>
    <source>
        <tissue>Leaf</tissue>
        <tissue>Stem</tissue>
    </source>
</reference>
<reference key="7">
    <citation type="journal article" date="2004" name="Plant Cell">
        <title>Experimental analysis of the Arabidopsis mitochondrial proteome highlights signaling and regulatory components, provides assessment of targeting prediction programs, and indicates plant-specific mitochondrial proteins.</title>
        <authorList>
            <person name="Heazlewood J.L."/>
            <person name="Tonti-Filippini J.S."/>
            <person name="Gout A.M."/>
            <person name="Day D.A."/>
            <person name="Whelan J."/>
            <person name="Millar A.H."/>
        </authorList>
    </citation>
    <scope>IDENTIFICATION BY MASS SPECTROMETRY</scope>
    <scope>SUBCELLULAR LOCATION [LARGE SCALE ANALYSIS]</scope>
    <source>
        <strain>cv. Landsberg erecta</strain>
    </source>
</reference>
<feature type="transit peptide" description="Mitochondrion" evidence="5">
    <location>
        <begin position="1"/>
        <end position="51"/>
    </location>
</feature>
<feature type="chain" id="PRO_0000002434" description="ATP synthase subunit beta-1, mitochondrial">
    <location>
        <begin position="52"/>
        <end position="556"/>
    </location>
</feature>
<feature type="region of interest" description="Disordered" evidence="4">
    <location>
        <begin position="1"/>
        <end position="37"/>
    </location>
</feature>
<feature type="compositionally biased region" description="Low complexity" evidence="4">
    <location>
        <begin position="1"/>
        <end position="20"/>
    </location>
</feature>
<feature type="binding site" evidence="1">
    <location>
        <begin position="231"/>
        <end position="238"/>
    </location>
    <ligand>
        <name>ATP</name>
        <dbReference type="ChEBI" id="CHEBI:30616"/>
    </ligand>
</feature>
<feature type="modified residue" description="Phosphoserine" evidence="2">
    <location>
        <position position="59"/>
    </location>
</feature>
<feature type="sequence conflict" description="In Ref. 1; CAC81058." evidence="7" ref="1">
    <original>M</original>
    <variation>MTMITPSSNTTHYRESWYACRYRSGIPGSTHASV</variation>
    <location>
        <position position="1"/>
    </location>
</feature>
<feature type="sequence conflict" description="In Ref. 4; BAC43182." evidence="7" ref="4">
    <original>G</original>
    <variation>V</variation>
    <location>
        <position position="23"/>
    </location>
</feature>
<feature type="sequence conflict" description="In Ref. 3; AED91336." evidence="7" ref="3">
    <original>H</original>
    <variation>P</variation>
    <location>
        <position position="37"/>
    </location>
</feature>
<protein>
    <recommendedName>
        <fullName>ATP synthase subunit beta-1, mitochondrial</fullName>
        <ecNumber>7.1.2.2</ecNumber>
    </recommendedName>
</protein>
<gene>
    <name type="ordered locus">At5g08670</name>
    <name type="ORF">T2K12.11</name>
</gene>
<comment type="function">
    <text>Mitochondrial membrane ATP synthase (F(1)F(0) ATP synthase or Complex V) produces ATP from ADP in the presence of a proton gradient across the membrane which is generated by electron transport complexes of the respiratory chain. F-type ATPases consist of two structural domains, F(1) - containing the extramembraneous catalytic core, and F(0) - containing the membrane proton channel, linked together by a central stalk and a peripheral stalk. During catalysis, ATP synthesis in the catalytic domain of F(1) is coupled via a rotary mechanism of the central stalk subunits to proton translocation. Subunits alpha and beta form the catalytic core in F(1). Rotation of the central stalk against the surrounding alpha(3)beta(3) subunits leads to hydrolysis of ATP in three separate catalytic sites on the beta subunits.</text>
</comment>
<comment type="catalytic activity">
    <reaction evidence="3">
        <text>ATP + H2O + 4 H(+)(in) = ADP + phosphate + 5 H(+)(out)</text>
        <dbReference type="Rhea" id="RHEA:57720"/>
        <dbReference type="ChEBI" id="CHEBI:15377"/>
        <dbReference type="ChEBI" id="CHEBI:15378"/>
        <dbReference type="ChEBI" id="CHEBI:30616"/>
        <dbReference type="ChEBI" id="CHEBI:43474"/>
        <dbReference type="ChEBI" id="CHEBI:456216"/>
        <dbReference type="EC" id="7.1.2.2"/>
    </reaction>
</comment>
<comment type="subunit">
    <text evidence="1">F-type ATPases have 2 components, CF(1) - the catalytic core - and CF(0) - the membrane proton channel. CF(1) has five subunits: alpha(3), beta(3), gamma(1), delta(1), epsilon(1). CF(0) has three main subunits: a, b and c (By similarity).</text>
</comment>
<comment type="subcellular location">
    <subcellularLocation>
        <location evidence="5 6">Mitochondrion</location>
    </subcellularLocation>
    <subcellularLocation>
        <location evidence="7">Mitochondrion inner membrane</location>
    </subcellularLocation>
    <text evidence="7">Peripheral membrane protein.</text>
</comment>
<comment type="similarity">
    <text evidence="7">Belongs to the ATPase alpha/beta chains family.</text>
</comment>
<keyword id="KW-0066">ATP synthesis</keyword>
<keyword id="KW-0067">ATP-binding</keyword>
<keyword id="KW-0139">CF(1)</keyword>
<keyword id="KW-0903">Direct protein sequencing</keyword>
<keyword id="KW-0375">Hydrogen ion transport</keyword>
<keyword id="KW-0406">Ion transport</keyword>
<keyword id="KW-0472">Membrane</keyword>
<keyword id="KW-0496">Mitochondrion</keyword>
<keyword id="KW-0999">Mitochondrion inner membrane</keyword>
<keyword id="KW-0547">Nucleotide-binding</keyword>
<keyword id="KW-0597">Phosphoprotein</keyword>
<keyword id="KW-1185">Reference proteome</keyword>
<keyword id="KW-0809">Transit peptide</keyword>
<keyword id="KW-1278">Translocase</keyword>
<keyword id="KW-0813">Transport</keyword>